<reference key="1">
    <citation type="journal article" date="2002" name="Lancet">
        <title>Genome and virulence determinants of high virulence community-acquired MRSA.</title>
        <authorList>
            <person name="Baba T."/>
            <person name="Takeuchi F."/>
            <person name="Kuroda M."/>
            <person name="Yuzawa H."/>
            <person name="Aoki K."/>
            <person name="Oguchi A."/>
            <person name="Nagai Y."/>
            <person name="Iwama N."/>
            <person name="Asano K."/>
            <person name="Naimi T."/>
            <person name="Kuroda H."/>
            <person name="Cui L."/>
            <person name="Yamamoto K."/>
            <person name="Hiramatsu K."/>
        </authorList>
    </citation>
    <scope>NUCLEOTIDE SEQUENCE [LARGE SCALE GENOMIC DNA]</scope>
    <source>
        <strain>MW2</strain>
    </source>
</reference>
<accession>Q79ZW0</accession>
<evidence type="ECO:0000250" key="1"/>
<evidence type="ECO:0000305" key="2"/>
<gene>
    <name type="primary">isaB</name>
    <name type="ordered locus">MW2559</name>
</gene>
<sequence length="175" mass="19370">MNKTSKVCVAATLALGTLIGVTVVENSAPTSKQAQAAITPYYTYNGYIGNNANFILDKNFINAIKYDNVKFNGIKLAKTNTIKKVEKYDQTFKGVSAKGNEASQLQFVVKNNISLKDIQKAYGKDLKKENGKTKEADSGIFYYQNAKKTLGIWFVVDHNRVVEVTVGHTPYKTSK</sequence>
<name>ISAB_STAAW</name>
<protein>
    <recommendedName>
        <fullName>Immunodominant staphylococcal antigen B</fullName>
    </recommendedName>
</protein>
<dbReference type="EMBL" id="BA000033">
    <property type="protein sequence ID" value="BAB96424.1"/>
    <property type="molecule type" value="Genomic_DNA"/>
</dbReference>
<dbReference type="RefSeq" id="WP_001044560.1">
    <property type="nucleotide sequence ID" value="NC_003923.1"/>
</dbReference>
<dbReference type="SMR" id="Q79ZW0"/>
<dbReference type="KEGG" id="sam:MW2559"/>
<dbReference type="HOGENOM" id="CLU_119552_0_0_9"/>
<dbReference type="GO" id="GO:0005576">
    <property type="term" value="C:extracellular region"/>
    <property type="evidence" value="ECO:0007669"/>
    <property type="project" value="UniProtKB-SubCell"/>
</dbReference>
<dbReference type="NCBIfam" id="NF047686">
    <property type="entry name" value="IsaB_fam"/>
    <property type="match status" value="1"/>
</dbReference>
<organism>
    <name type="scientific">Staphylococcus aureus (strain MW2)</name>
    <dbReference type="NCBI Taxonomy" id="196620"/>
    <lineage>
        <taxon>Bacteria</taxon>
        <taxon>Bacillati</taxon>
        <taxon>Bacillota</taxon>
        <taxon>Bacilli</taxon>
        <taxon>Bacillales</taxon>
        <taxon>Staphylococcaceae</taxon>
        <taxon>Staphylococcus</taxon>
    </lineage>
</organism>
<feature type="signal peptide" evidence="1">
    <location>
        <begin position="1"/>
        <end position="36"/>
    </location>
</feature>
<feature type="chain" id="PRO_0000272670" description="Immunodominant staphylococcal antigen B">
    <location>
        <begin position="37"/>
        <end position="175"/>
    </location>
</feature>
<keyword id="KW-0964">Secreted</keyword>
<keyword id="KW-0732">Signal</keyword>
<proteinExistence type="inferred from homology"/>
<comment type="subcellular location">
    <subcellularLocation>
        <location evidence="1">Secreted</location>
    </subcellularLocation>
</comment>
<comment type="similarity">
    <text evidence="2">Belongs to the IsaB family.</text>
</comment>